<gene>
    <name type="primary">Erich4</name>
    <name type="synonym">Gm7092</name>
</gene>
<sequence length="136" mass="15244">MEPWVQLKQAGLEPSGLGPLPKALRVPPPEGNPGQALMSSGAELGGARELILWIWEELGNLRRVDVQLLGQLCDLGLEMGTFREELVTILEEEEEEEEQEEKSCVEENKGPEEKQDEERSRSSYPAQRLPDFGMTI</sequence>
<accession>Q3UNU4</accession>
<proteinExistence type="evidence at transcript level"/>
<name>ERIC4_MOUSE</name>
<organism>
    <name type="scientific">Mus musculus</name>
    <name type="common">Mouse</name>
    <dbReference type="NCBI Taxonomy" id="10090"/>
    <lineage>
        <taxon>Eukaryota</taxon>
        <taxon>Metazoa</taxon>
        <taxon>Chordata</taxon>
        <taxon>Craniata</taxon>
        <taxon>Vertebrata</taxon>
        <taxon>Euteleostomi</taxon>
        <taxon>Mammalia</taxon>
        <taxon>Eutheria</taxon>
        <taxon>Euarchontoglires</taxon>
        <taxon>Glires</taxon>
        <taxon>Rodentia</taxon>
        <taxon>Myomorpha</taxon>
        <taxon>Muroidea</taxon>
        <taxon>Muridae</taxon>
        <taxon>Murinae</taxon>
        <taxon>Mus</taxon>
        <taxon>Mus</taxon>
    </lineage>
</organism>
<keyword id="KW-1185">Reference proteome</keyword>
<feature type="chain" id="PRO_0000340278" description="Glutamate-rich protein 4">
    <location>
        <begin position="1"/>
        <end position="136"/>
    </location>
</feature>
<feature type="region of interest" description="Disordered" evidence="1">
    <location>
        <begin position="92"/>
        <end position="136"/>
    </location>
</feature>
<feature type="compositionally biased region" description="Basic and acidic residues" evidence="1">
    <location>
        <begin position="101"/>
        <end position="121"/>
    </location>
</feature>
<feature type="sequence conflict" description="In Ref. 2; BC038495." evidence="2" ref="2">
    <original>G</original>
    <variation>E</variation>
    <location>
        <position position="133"/>
    </location>
</feature>
<evidence type="ECO:0000256" key="1">
    <source>
        <dbReference type="SAM" id="MobiDB-lite"/>
    </source>
</evidence>
<evidence type="ECO:0000305" key="2"/>
<dbReference type="EMBL" id="AK143993">
    <property type="protein sequence ID" value="BAE25653.1"/>
    <property type="molecule type" value="mRNA"/>
</dbReference>
<dbReference type="EMBL" id="BC038495">
    <property type="status" value="NOT_ANNOTATED_CDS"/>
    <property type="molecule type" value="mRNA"/>
</dbReference>
<dbReference type="CCDS" id="CCDS20987.2"/>
<dbReference type="RefSeq" id="NP_001034332.2">
    <property type="nucleotide sequence ID" value="NM_001039243.3"/>
</dbReference>
<dbReference type="SMR" id="Q3UNU4"/>
<dbReference type="PaxDb" id="10090-ENSMUSP00000096260"/>
<dbReference type="GeneID" id="632778"/>
<dbReference type="KEGG" id="mmu:632778"/>
<dbReference type="AGR" id="MGI:3646269"/>
<dbReference type="CTD" id="100170765"/>
<dbReference type="MGI" id="MGI:3646269">
    <property type="gene designation" value="Erich4"/>
</dbReference>
<dbReference type="eggNOG" id="ENOG502RWFY">
    <property type="taxonomic scope" value="Eukaryota"/>
</dbReference>
<dbReference type="InParanoid" id="Q3UNU4"/>
<dbReference type="OrthoDB" id="9838132at2759"/>
<dbReference type="PhylomeDB" id="Q3UNU4"/>
<dbReference type="BioGRID-ORCS" id="632778">
    <property type="hits" value="1 hit in 70 CRISPR screens"/>
</dbReference>
<dbReference type="PRO" id="PR:Q3UNU4"/>
<dbReference type="Proteomes" id="UP000000589">
    <property type="component" value="Unplaced"/>
</dbReference>
<dbReference type="RNAct" id="Q3UNU4">
    <property type="molecule type" value="protein"/>
</dbReference>
<dbReference type="InterPro" id="IPR029202">
    <property type="entry name" value="DUF4530"/>
</dbReference>
<dbReference type="PANTHER" id="PTHR36879">
    <property type="entry name" value="GLUTAMATE-RICH PROTEIN 4"/>
    <property type="match status" value="1"/>
</dbReference>
<dbReference type="PANTHER" id="PTHR36879:SF1">
    <property type="entry name" value="GLUTAMATE-RICH PROTEIN 4"/>
    <property type="match status" value="1"/>
</dbReference>
<dbReference type="Pfam" id="PF15039">
    <property type="entry name" value="DUF4530"/>
    <property type="match status" value="1"/>
</dbReference>
<protein>
    <recommendedName>
        <fullName>Glutamate-rich protein 4</fullName>
    </recommendedName>
</protein>
<reference key="1">
    <citation type="journal article" date="2005" name="Science">
        <title>The transcriptional landscape of the mammalian genome.</title>
        <authorList>
            <person name="Carninci P."/>
            <person name="Kasukawa T."/>
            <person name="Katayama S."/>
            <person name="Gough J."/>
            <person name="Frith M.C."/>
            <person name="Maeda N."/>
            <person name="Oyama R."/>
            <person name="Ravasi T."/>
            <person name="Lenhard B."/>
            <person name="Wells C."/>
            <person name="Kodzius R."/>
            <person name="Shimokawa K."/>
            <person name="Bajic V.B."/>
            <person name="Brenner S.E."/>
            <person name="Batalov S."/>
            <person name="Forrest A.R."/>
            <person name="Zavolan M."/>
            <person name="Davis M.J."/>
            <person name="Wilming L.G."/>
            <person name="Aidinis V."/>
            <person name="Allen J.E."/>
            <person name="Ambesi-Impiombato A."/>
            <person name="Apweiler R."/>
            <person name="Aturaliya R.N."/>
            <person name="Bailey T.L."/>
            <person name="Bansal M."/>
            <person name="Baxter L."/>
            <person name="Beisel K.W."/>
            <person name="Bersano T."/>
            <person name="Bono H."/>
            <person name="Chalk A.M."/>
            <person name="Chiu K.P."/>
            <person name="Choudhary V."/>
            <person name="Christoffels A."/>
            <person name="Clutterbuck D.R."/>
            <person name="Crowe M.L."/>
            <person name="Dalla E."/>
            <person name="Dalrymple B.P."/>
            <person name="de Bono B."/>
            <person name="Della Gatta G."/>
            <person name="di Bernardo D."/>
            <person name="Down T."/>
            <person name="Engstrom P."/>
            <person name="Fagiolini M."/>
            <person name="Faulkner G."/>
            <person name="Fletcher C.F."/>
            <person name="Fukushima T."/>
            <person name="Furuno M."/>
            <person name="Futaki S."/>
            <person name="Gariboldi M."/>
            <person name="Georgii-Hemming P."/>
            <person name="Gingeras T.R."/>
            <person name="Gojobori T."/>
            <person name="Green R.E."/>
            <person name="Gustincich S."/>
            <person name="Harbers M."/>
            <person name="Hayashi Y."/>
            <person name="Hensch T.K."/>
            <person name="Hirokawa N."/>
            <person name="Hill D."/>
            <person name="Huminiecki L."/>
            <person name="Iacono M."/>
            <person name="Ikeo K."/>
            <person name="Iwama A."/>
            <person name="Ishikawa T."/>
            <person name="Jakt M."/>
            <person name="Kanapin A."/>
            <person name="Katoh M."/>
            <person name="Kawasawa Y."/>
            <person name="Kelso J."/>
            <person name="Kitamura H."/>
            <person name="Kitano H."/>
            <person name="Kollias G."/>
            <person name="Krishnan S.P."/>
            <person name="Kruger A."/>
            <person name="Kummerfeld S.K."/>
            <person name="Kurochkin I.V."/>
            <person name="Lareau L.F."/>
            <person name="Lazarevic D."/>
            <person name="Lipovich L."/>
            <person name="Liu J."/>
            <person name="Liuni S."/>
            <person name="McWilliam S."/>
            <person name="Madan Babu M."/>
            <person name="Madera M."/>
            <person name="Marchionni L."/>
            <person name="Matsuda H."/>
            <person name="Matsuzawa S."/>
            <person name="Miki H."/>
            <person name="Mignone F."/>
            <person name="Miyake S."/>
            <person name="Morris K."/>
            <person name="Mottagui-Tabar S."/>
            <person name="Mulder N."/>
            <person name="Nakano N."/>
            <person name="Nakauchi H."/>
            <person name="Ng P."/>
            <person name="Nilsson R."/>
            <person name="Nishiguchi S."/>
            <person name="Nishikawa S."/>
            <person name="Nori F."/>
            <person name="Ohara O."/>
            <person name="Okazaki Y."/>
            <person name="Orlando V."/>
            <person name="Pang K.C."/>
            <person name="Pavan W.J."/>
            <person name="Pavesi G."/>
            <person name="Pesole G."/>
            <person name="Petrovsky N."/>
            <person name="Piazza S."/>
            <person name="Reed J."/>
            <person name="Reid J.F."/>
            <person name="Ring B.Z."/>
            <person name="Ringwald M."/>
            <person name="Rost B."/>
            <person name="Ruan Y."/>
            <person name="Salzberg S.L."/>
            <person name="Sandelin A."/>
            <person name="Schneider C."/>
            <person name="Schoenbach C."/>
            <person name="Sekiguchi K."/>
            <person name="Semple C.A."/>
            <person name="Seno S."/>
            <person name="Sessa L."/>
            <person name="Sheng Y."/>
            <person name="Shibata Y."/>
            <person name="Shimada H."/>
            <person name="Shimada K."/>
            <person name="Silva D."/>
            <person name="Sinclair B."/>
            <person name="Sperling S."/>
            <person name="Stupka E."/>
            <person name="Sugiura K."/>
            <person name="Sultana R."/>
            <person name="Takenaka Y."/>
            <person name="Taki K."/>
            <person name="Tammoja K."/>
            <person name="Tan S.L."/>
            <person name="Tang S."/>
            <person name="Taylor M.S."/>
            <person name="Tegner J."/>
            <person name="Teichmann S.A."/>
            <person name="Ueda H.R."/>
            <person name="van Nimwegen E."/>
            <person name="Verardo R."/>
            <person name="Wei C.L."/>
            <person name="Yagi K."/>
            <person name="Yamanishi H."/>
            <person name="Zabarovsky E."/>
            <person name="Zhu S."/>
            <person name="Zimmer A."/>
            <person name="Hide W."/>
            <person name="Bult C."/>
            <person name="Grimmond S.M."/>
            <person name="Teasdale R.D."/>
            <person name="Liu E.T."/>
            <person name="Brusic V."/>
            <person name="Quackenbush J."/>
            <person name="Wahlestedt C."/>
            <person name="Mattick J.S."/>
            <person name="Hume D.A."/>
            <person name="Kai C."/>
            <person name="Sasaki D."/>
            <person name="Tomaru Y."/>
            <person name="Fukuda S."/>
            <person name="Kanamori-Katayama M."/>
            <person name="Suzuki M."/>
            <person name="Aoki J."/>
            <person name="Arakawa T."/>
            <person name="Iida J."/>
            <person name="Imamura K."/>
            <person name="Itoh M."/>
            <person name="Kato T."/>
            <person name="Kawaji H."/>
            <person name="Kawagashira N."/>
            <person name="Kawashima T."/>
            <person name="Kojima M."/>
            <person name="Kondo S."/>
            <person name="Konno H."/>
            <person name="Nakano K."/>
            <person name="Ninomiya N."/>
            <person name="Nishio T."/>
            <person name="Okada M."/>
            <person name="Plessy C."/>
            <person name="Shibata K."/>
            <person name="Shiraki T."/>
            <person name="Suzuki S."/>
            <person name="Tagami M."/>
            <person name="Waki K."/>
            <person name="Watahiki A."/>
            <person name="Okamura-Oho Y."/>
            <person name="Suzuki H."/>
            <person name="Kawai J."/>
            <person name="Hayashizaki Y."/>
        </authorList>
    </citation>
    <scope>NUCLEOTIDE SEQUENCE [LARGE SCALE MRNA]</scope>
    <source>
        <strain>C57BL/6J</strain>
        <tissue>Kidney</tissue>
    </source>
</reference>
<reference key="2">
    <citation type="journal article" date="2004" name="Genome Res.">
        <title>The status, quality, and expansion of the NIH full-length cDNA project: the Mammalian Gene Collection (MGC).</title>
        <authorList>
            <consortium name="The MGC Project Team"/>
        </authorList>
    </citation>
    <scope>NUCLEOTIDE SEQUENCE [LARGE SCALE MRNA]</scope>
    <source>
        <strain>FVB/N</strain>
        <tissue>Kidney</tissue>
    </source>
</reference>